<organism>
    <name type="scientific">Drosophila subobscura</name>
    <name type="common">Fruit fly</name>
    <dbReference type="NCBI Taxonomy" id="7241"/>
    <lineage>
        <taxon>Eukaryota</taxon>
        <taxon>Metazoa</taxon>
        <taxon>Ecdysozoa</taxon>
        <taxon>Arthropoda</taxon>
        <taxon>Hexapoda</taxon>
        <taxon>Insecta</taxon>
        <taxon>Pterygota</taxon>
        <taxon>Neoptera</taxon>
        <taxon>Endopterygota</taxon>
        <taxon>Diptera</taxon>
        <taxon>Brachycera</taxon>
        <taxon>Muscomorpha</taxon>
        <taxon>Ephydroidea</taxon>
        <taxon>Drosophilidae</taxon>
        <taxon>Drosophila</taxon>
        <taxon>Sophophora</taxon>
    </lineage>
</organism>
<comment type="similarity">
    <text evidence="1">Belongs to the eukaryotic ribosomal protein eL32 family.</text>
</comment>
<gene>
    <name type="primary">RpL32</name>
    <name type="synonym">M(3)99D</name>
    <name type="synonym">rp49</name>
</gene>
<dbReference type="EMBL" id="M21333">
    <property type="protein sequence ID" value="AAA28857.1"/>
    <property type="molecule type" value="Genomic_DNA"/>
</dbReference>
<dbReference type="EMBL" id="X72646">
    <property type="protein sequence ID" value="CAA51211.1"/>
    <property type="molecule type" value="Genomic_DNA"/>
</dbReference>
<dbReference type="EMBL" id="X72647">
    <property type="protein sequence ID" value="CAA51212.1"/>
    <property type="molecule type" value="Genomic_DNA"/>
</dbReference>
<dbReference type="EMBL" id="X72648">
    <property type="protein sequence ID" value="CAA51213.1"/>
    <property type="molecule type" value="Genomic_DNA"/>
</dbReference>
<dbReference type="EMBL" id="X72649">
    <property type="protein sequence ID" value="CAA51214.1"/>
    <property type="molecule type" value="Genomic_DNA"/>
</dbReference>
<dbReference type="EMBL" id="X72650">
    <property type="protein sequence ID" value="CAA51215.1"/>
    <property type="molecule type" value="Genomic_DNA"/>
</dbReference>
<dbReference type="EMBL" id="X72651">
    <property type="protein sequence ID" value="CAA51216.1"/>
    <property type="molecule type" value="Genomic_DNA"/>
</dbReference>
<dbReference type="EMBL" id="X72652">
    <property type="protein sequence ID" value="CAA51217.1"/>
    <property type="molecule type" value="Genomic_DNA"/>
</dbReference>
<dbReference type="EMBL" id="X72653">
    <property type="protein sequence ID" value="CAA51218.1"/>
    <property type="molecule type" value="Genomic_DNA"/>
</dbReference>
<dbReference type="EMBL" id="X72654">
    <property type="protein sequence ID" value="CAA51219.1"/>
    <property type="molecule type" value="Genomic_DNA"/>
</dbReference>
<dbReference type="EMBL" id="X80076">
    <property type="protein sequence ID" value="CAA56381.1"/>
    <property type="molecule type" value="Genomic_DNA"/>
</dbReference>
<dbReference type="EMBL" id="X80077">
    <property type="protein sequence ID" value="CAA56382.1"/>
    <property type="molecule type" value="Genomic_DNA"/>
</dbReference>
<dbReference type="EMBL" id="X80078">
    <property type="protein sequence ID" value="CAA56383.1"/>
    <property type="molecule type" value="Genomic_DNA"/>
</dbReference>
<dbReference type="EMBL" id="X80079">
    <property type="protein sequence ID" value="CAA56384.1"/>
    <property type="molecule type" value="Genomic_DNA"/>
</dbReference>
<dbReference type="EMBL" id="X80080">
    <property type="protein sequence ID" value="CAA56385.1"/>
    <property type="molecule type" value="Genomic_DNA"/>
</dbReference>
<dbReference type="EMBL" id="X80081">
    <property type="protein sequence ID" value="CAA56386.1"/>
    <property type="molecule type" value="Genomic_DNA"/>
</dbReference>
<dbReference type="EMBL" id="X80082">
    <property type="protein sequence ID" value="CAA56387.1"/>
    <property type="molecule type" value="Genomic_DNA"/>
</dbReference>
<dbReference type="EMBL" id="X80083">
    <property type="protein sequence ID" value="CAA56388.1"/>
    <property type="molecule type" value="Genomic_DNA"/>
</dbReference>
<dbReference type="EMBL" id="X80084">
    <property type="protein sequence ID" value="CAA56389.1"/>
    <property type="molecule type" value="Genomic_DNA"/>
</dbReference>
<dbReference type="EMBL" id="X80085">
    <property type="protein sequence ID" value="CAA56390.1"/>
    <property type="molecule type" value="Genomic_DNA"/>
</dbReference>
<dbReference type="EMBL" id="X80086">
    <property type="protein sequence ID" value="CAA56391.1"/>
    <property type="molecule type" value="Genomic_DNA"/>
</dbReference>
<dbReference type="EMBL" id="X80087">
    <property type="protein sequence ID" value="CAA56392.1"/>
    <property type="molecule type" value="Genomic_DNA"/>
</dbReference>
<dbReference type="EMBL" id="X80088">
    <property type="protein sequence ID" value="CAA56393.1"/>
    <property type="molecule type" value="Genomic_DNA"/>
</dbReference>
<dbReference type="EMBL" id="X80089">
    <property type="protein sequence ID" value="CAA56394.1"/>
    <property type="molecule type" value="Genomic_DNA"/>
</dbReference>
<dbReference type="EMBL" id="X80090">
    <property type="protein sequence ID" value="CAA56395.1"/>
    <property type="molecule type" value="Genomic_DNA"/>
</dbReference>
<dbReference type="EMBL" id="X80091">
    <property type="protein sequence ID" value="CAA56396.1"/>
    <property type="molecule type" value="Genomic_DNA"/>
</dbReference>
<dbReference type="EMBL" id="X80092">
    <property type="protein sequence ID" value="CAA56397.1"/>
    <property type="molecule type" value="Genomic_DNA"/>
</dbReference>
<dbReference type="EMBL" id="X80093">
    <property type="protein sequence ID" value="CAA56398.1"/>
    <property type="molecule type" value="Genomic_DNA"/>
</dbReference>
<dbReference type="EMBL" id="X80094">
    <property type="protein sequence ID" value="CAA56399.1"/>
    <property type="molecule type" value="Genomic_DNA"/>
</dbReference>
<dbReference type="EMBL" id="X80095">
    <property type="protein sequence ID" value="CAA56400.1"/>
    <property type="molecule type" value="Genomic_DNA"/>
</dbReference>
<dbReference type="EMBL" id="X80096">
    <property type="protein sequence ID" value="CAA56401.1"/>
    <property type="molecule type" value="Genomic_DNA"/>
</dbReference>
<dbReference type="EMBL" id="X80097">
    <property type="protein sequence ID" value="CAA56402.1"/>
    <property type="molecule type" value="Genomic_DNA"/>
</dbReference>
<dbReference type="EMBL" id="X80098">
    <property type="protein sequence ID" value="CAA56403.1"/>
    <property type="molecule type" value="Genomic_DNA"/>
</dbReference>
<dbReference type="EMBL" id="X80099">
    <property type="protein sequence ID" value="CAA56404.1"/>
    <property type="molecule type" value="Genomic_DNA"/>
</dbReference>
<dbReference type="EMBL" id="X80100">
    <property type="protein sequence ID" value="CAA56405.1"/>
    <property type="molecule type" value="Genomic_DNA"/>
</dbReference>
<dbReference type="EMBL" id="X80101">
    <property type="protein sequence ID" value="CAA56406.1"/>
    <property type="molecule type" value="Genomic_DNA"/>
</dbReference>
<dbReference type="EMBL" id="X80102">
    <property type="protein sequence ID" value="CAA56407.1"/>
    <property type="molecule type" value="Genomic_DNA"/>
</dbReference>
<dbReference type="EMBL" id="X80103">
    <property type="protein sequence ID" value="CAA56408.1"/>
    <property type="molecule type" value="Genomic_DNA"/>
</dbReference>
<dbReference type="EMBL" id="X80104">
    <property type="protein sequence ID" value="CAA56409.1"/>
    <property type="molecule type" value="Genomic_DNA"/>
</dbReference>
<dbReference type="EMBL" id="X80105">
    <property type="protein sequence ID" value="CAA56410.1"/>
    <property type="molecule type" value="Genomic_DNA"/>
</dbReference>
<dbReference type="EMBL" id="X80106">
    <property type="protein sequence ID" value="CAA56411.1"/>
    <property type="molecule type" value="Genomic_DNA"/>
</dbReference>
<dbReference type="EMBL" id="X80107">
    <property type="protein sequence ID" value="CAA56412.1"/>
    <property type="molecule type" value="Genomic_DNA"/>
</dbReference>
<dbReference type="EMBL" id="X80108">
    <property type="protein sequence ID" value="CAA56413.1"/>
    <property type="molecule type" value="Genomic_DNA"/>
</dbReference>
<dbReference type="EMBL" id="X80109">
    <property type="protein sequence ID" value="CAA56414.1"/>
    <property type="molecule type" value="Genomic_DNA"/>
</dbReference>
<dbReference type="EMBL" id="AJ228881">
    <property type="protein sequence ID" value="CAB41776.1"/>
    <property type="molecule type" value="Genomic_DNA"/>
</dbReference>
<dbReference type="EMBL" id="AJ228882">
    <property type="protein sequence ID" value="CAB41777.1"/>
    <property type="molecule type" value="Genomic_DNA"/>
</dbReference>
<dbReference type="EMBL" id="AJ228883">
    <property type="protein sequence ID" value="CAB41778.1"/>
    <property type="molecule type" value="Genomic_DNA"/>
</dbReference>
<dbReference type="EMBL" id="AJ228884">
    <property type="protein sequence ID" value="CAB41779.1"/>
    <property type="molecule type" value="Genomic_DNA"/>
</dbReference>
<dbReference type="EMBL" id="AJ228885">
    <property type="protein sequence ID" value="CAB41780.1"/>
    <property type="molecule type" value="Genomic_DNA"/>
</dbReference>
<dbReference type="EMBL" id="AJ228886">
    <property type="protein sequence ID" value="CAB41781.1"/>
    <property type="molecule type" value="Genomic_DNA"/>
</dbReference>
<dbReference type="EMBL" id="AJ228887">
    <property type="protein sequence ID" value="CAB41782.1"/>
    <property type="molecule type" value="Genomic_DNA"/>
</dbReference>
<dbReference type="EMBL" id="AJ228888">
    <property type="protein sequence ID" value="CAB41783.1"/>
    <property type="molecule type" value="Genomic_DNA"/>
</dbReference>
<dbReference type="EMBL" id="AJ228889">
    <property type="protein sequence ID" value="CAB41784.1"/>
    <property type="molecule type" value="Genomic_DNA"/>
</dbReference>
<dbReference type="EMBL" id="AJ228890">
    <property type="protein sequence ID" value="CAB41785.1"/>
    <property type="molecule type" value="Genomic_DNA"/>
</dbReference>
<dbReference type="EMBL" id="AJ228891">
    <property type="protein sequence ID" value="CAB41786.1"/>
    <property type="molecule type" value="Genomic_DNA"/>
</dbReference>
<dbReference type="EMBL" id="AJ228892">
    <property type="protein sequence ID" value="CAB41787.1"/>
    <property type="molecule type" value="Genomic_DNA"/>
</dbReference>
<dbReference type="EMBL" id="AJ228893">
    <property type="protein sequence ID" value="CAB41788.1"/>
    <property type="molecule type" value="Genomic_DNA"/>
</dbReference>
<dbReference type="EMBL" id="AJ228894">
    <property type="protein sequence ID" value="CAB41789.1"/>
    <property type="molecule type" value="Genomic_DNA"/>
</dbReference>
<dbReference type="EMBL" id="AJ228895">
    <property type="protein sequence ID" value="CAB41790.1"/>
    <property type="molecule type" value="Genomic_DNA"/>
</dbReference>
<dbReference type="EMBL" id="AJ228896">
    <property type="protein sequence ID" value="CAB41791.1"/>
    <property type="molecule type" value="Genomic_DNA"/>
</dbReference>
<dbReference type="EMBL" id="AJ228897">
    <property type="protein sequence ID" value="CAB41792.1"/>
    <property type="molecule type" value="Genomic_DNA"/>
</dbReference>
<dbReference type="EMBL" id="AJ228898">
    <property type="protein sequence ID" value="CAB41793.1"/>
    <property type="molecule type" value="Genomic_DNA"/>
</dbReference>
<dbReference type="EMBL" id="AJ228899">
    <property type="protein sequence ID" value="CAB41794.1"/>
    <property type="molecule type" value="Genomic_DNA"/>
</dbReference>
<dbReference type="EMBL" id="AJ228900">
    <property type="protein sequence ID" value="CAB41795.1"/>
    <property type="molecule type" value="Genomic_DNA"/>
</dbReference>
<dbReference type="EMBL" id="AJ228901">
    <property type="protein sequence ID" value="CAB41796.1"/>
    <property type="molecule type" value="Genomic_DNA"/>
</dbReference>
<dbReference type="EMBL" id="AJ228902">
    <property type="protein sequence ID" value="CAB41797.1"/>
    <property type="molecule type" value="Genomic_DNA"/>
</dbReference>
<dbReference type="EMBL" id="AJ228903">
    <property type="protein sequence ID" value="CAB41798.1"/>
    <property type="molecule type" value="Genomic_DNA"/>
</dbReference>
<dbReference type="EMBL" id="AJ228904">
    <property type="protein sequence ID" value="CAB41799.1"/>
    <property type="molecule type" value="Genomic_DNA"/>
</dbReference>
<dbReference type="EMBL" id="AJ228905">
    <property type="protein sequence ID" value="CAB41800.1"/>
    <property type="molecule type" value="Genomic_DNA"/>
</dbReference>
<dbReference type="EMBL" id="AJ228906">
    <property type="protein sequence ID" value="CAB41801.1"/>
    <property type="molecule type" value="Genomic_DNA"/>
</dbReference>
<dbReference type="EMBL" id="AJ228907">
    <property type="protein sequence ID" value="CAB41802.1"/>
    <property type="molecule type" value="Genomic_DNA"/>
</dbReference>
<dbReference type="EMBL" id="AJ228908">
    <property type="protein sequence ID" value="CAB41803.1"/>
    <property type="molecule type" value="Genomic_DNA"/>
</dbReference>
<dbReference type="EMBL" id="AJ228909">
    <property type="protein sequence ID" value="CAB41804.1"/>
    <property type="molecule type" value="Genomic_DNA"/>
</dbReference>
<dbReference type="EMBL" id="AJ228910">
    <property type="protein sequence ID" value="CAB41805.1"/>
    <property type="molecule type" value="Genomic_DNA"/>
</dbReference>
<dbReference type="EMBL" id="AJ228911">
    <property type="protein sequence ID" value="CAB41806.1"/>
    <property type="molecule type" value="Genomic_DNA"/>
</dbReference>
<dbReference type="EMBL" id="AJ228912">
    <property type="protein sequence ID" value="CAB41807.1"/>
    <property type="molecule type" value="Genomic_DNA"/>
</dbReference>
<dbReference type="EMBL" id="AJ228913">
    <property type="protein sequence ID" value="CAB41808.1"/>
    <property type="molecule type" value="Genomic_DNA"/>
</dbReference>
<dbReference type="EMBL" id="AJ228914">
    <property type="protein sequence ID" value="CAB41809.1"/>
    <property type="molecule type" value="Genomic_DNA"/>
</dbReference>
<dbReference type="EMBL" id="AJ228915">
    <property type="protein sequence ID" value="CAB41810.1"/>
    <property type="molecule type" value="Genomic_DNA"/>
</dbReference>
<dbReference type="EMBL" id="AJ228916">
    <property type="protein sequence ID" value="CAB41811.1"/>
    <property type="molecule type" value="Genomic_DNA"/>
</dbReference>
<dbReference type="EMBL" id="AJ228917">
    <property type="protein sequence ID" value="CAB41812.1"/>
    <property type="molecule type" value="Genomic_DNA"/>
</dbReference>
<dbReference type="EMBL" id="AJ228918">
    <property type="protein sequence ID" value="CAB41813.1"/>
    <property type="molecule type" value="Genomic_DNA"/>
</dbReference>
<dbReference type="EMBL" id="AJ228919">
    <property type="protein sequence ID" value="CAB41814.1"/>
    <property type="molecule type" value="Genomic_DNA"/>
</dbReference>
<dbReference type="EMBL" id="AJ228920">
    <property type="protein sequence ID" value="CAB41815.1"/>
    <property type="molecule type" value="Genomic_DNA"/>
</dbReference>
<dbReference type="EMBL" id="AJ228921">
    <property type="protein sequence ID" value="CAB41816.1"/>
    <property type="molecule type" value="Genomic_DNA"/>
</dbReference>
<dbReference type="EMBL" id="AJ310269">
    <property type="protein sequence ID" value="CAC47988.1"/>
    <property type="molecule type" value="Genomic_DNA"/>
</dbReference>
<dbReference type="EMBL" id="AJ310270">
    <property type="protein sequence ID" value="CAC47989.1"/>
    <property type="molecule type" value="Genomic_DNA"/>
</dbReference>
<dbReference type="EMBL" id="AJ310271">
    <property type="protein sequence ID" value="CAC47990.1"/>
    <property type="molecule type" value="Genomic_DNA"/>
</dbReference>
<dbReference type="EMBL" id="AJ310272">
    <property type="protein sequence ID" value="CAC47991.1"/>
    <property type="molecule type" value="Genomic_DNA"/>
</dbReference>
<dbReference type="EMBL" id="AJ310273">
    <property type="protein sequence ID" value="CAC47992.1"/>
    <property type="molecule type" value="Genomic_DNA"/>
</dbReference>
<dbReference type="EMBL" id="AJ310274">
    <property type="protein sequence ID" value="CAC47993.1"/>
    <property type="molecule type" value="Genomic_DNA"/>
</dbReference>
<dbReference type="EMBL" id="AJ310275">
    <property type="protein sequence ID" value="CAC47994.1"/>
    <property type="molecule type" value="Genomic_DNA"/>
</dbReference>
<dbReference type="EMBL" id="AJ310276">
    <property type="protein sequence ID" value="CAC47995.1"/>
    <property type="molecule type" value="Genomic_DNA"/>
</dbReference>
<dbReference type="EMBL" id="AJ310277">
    <property type="protein sequence ID" value="CAC47996.1"/>
    <property type="molecule type" value="Genomic_DNA"/>
</dbReference>
<dbReference type="EMBL" id="AJ310278">
    <property type="protein sequence ID" value="CAC47997.1"/>
    <property type="molecule type" value="Genomic_DNA"/>
</dbReference>
<dbReference type="EMBL" id="AJ310279">
    <property type="protein sequence ID" value="CAC47998.1"/>
    <property type="molecule type" value="Genomic_DNA"/>
</dbReference>
<dbReference type="EMBL" id="AJ310280">
    <property type="protein sequence ID" value="CAC47999.1"/>
    <property type="molecule type" value="Genomic_DNA"/>
</dbReference>
<dbReference type="EMBL" id="AJ310281">
    <property type="protein sequence ID" value="CAC48000.1"/>
    <property type="molecule type" value="Genomic_DNA"/>
</dbReference>
<dbReference type="EMBL" id="AJ310282">
    <property type="protein sequence ID" value="CAC48001.1"/>
    <property type="molecule type" value="Genomic_DNA"/>
</dbReference>
<dbReference type="EMBL" id="AJ310283">
    <property type="protein sequence ID" value="CAC48002.1"/>
    <property type="molecule type" value="Genomic_DNA"/>
</dbReference>
<dbReference type="EMBL" id="AJ310284">
    <property type="protein sequence ID" value="CAC48003.1"/>
    <property type="molecule type" value="Genomic_DNA"/>
</dbReference>
<dbReference type="PIR" id="A31207">
    <property type="entry name" value="R5FF32"/>
</dbReference>
<dbReference type="SMR" id="P84311"/>
<dbReference type="EnsemblMetazoa" id="XM_034808530.1">
    <property type="protein sequence ID" value="XP_034664421.1"/>
    <property type="gene ID" value="LOC117898854"/>
</dbReference>
<dbReference type="FlyBase" id="FBgn0012945">
    <property type="gene designation" value="Dsub\RpL32"/>
</dbReference>
<dbReference type="GO" id="GO:0022625">
    <property type="term" value="C:cytosolic large ribosomal subunit"/>
    <property type="evidence" value="ECO:0007669"/>
    <property type="project" value="TreeGrafter"/>
</dbReference>
<dbReference type="GO" id="GO:0003735">
    <property type="term" value="F:structural constituent of ribosome"/>
    <property type="evidence" value="ECO:0007669"/>
    <property type="project" value="InterPro"/>
</dbReference>
<dbReference type="GO" id="GO:0006412">
    <property type="term" value="P:translation"/>
    <property type="evidence" value="ECO:0007669"/>
    <property type="project" value="InterPro"/>
</dbReference>
<dbReference type="CDD" id="cd00513">
    <property type="entry name" value="Ribosomal_L32_L32e"/>
    <property type="match status" value="1"/>
</dbReference>
<dbReference type="InterPro" id="IPR001515">
    <property type="entry name" value="Ribosomal_eL32"/>
</dbReference>
<dbReference type="InterPro" id="IPR018263">
    <property type="entry name" value="Ribosomal_eL32_CS"/>
</dbReference>
<dbReference type="InterPro" id="IPR036351">
    <property type="entry name" value="Ribosomal_eL32_sf"/>
</dbReference>
<dbReference type="PANTHER" id="PTHR23413">
    <property type="entry name" value="60S RIBOSOMAL PROTEIN L32 AND DNA-DIRECTED RNA POLYMERASE II, SUBUNIT N"/>
    <property type="match status" value="1"/>
</dbReference>
<dbReference type="PANTHER" id="PTHR23413:SF1">
    <property type="entry name" value="RIBOSOMAL PROTEIN L32"/>
    <property type="match status" value="1"/>
</dbReference>
<dbReference type="Pfam" id="PF01655">
    <property type="entry name" value="Ribosomal_L32e"/>
    <property type="match status" value="1"/>
</dbReference>
<dbReference type="SMART" id="SM01393">
    <property type="entry name" value="Ribosomal_L32e"/>
    <property type="match status" value="1"/>
</dbReference>
<dbReference type="SUPFAM" id="SSF52042">
    <property type="entry name" value="Ribosomal protein L32e"/>
    <property type="match status" value="1"/>
</dbReference>
<dbReference type="PROSITE" id="PS00580">
    <property type="entry name" value="RIBOSOMAL_L32E"/>
    <property type="match status" value="1"/>
</dbReference>
<proteinExistence type="inferred from homology"/>
<protein>
    <recommendedName>
        <fullName evidence="1">Large ribosomal subunit protein eL32</fullName>
    </recommendedName>
    <alternativeName>
        <fullName>60S ribosomal protein L32</fullName>
    </alternativeName>
    <alternativeName>
        <fullName>Ribosomal protein 49</fullName>
    </alternativeName>
</protein>
<feature type="chain" id="PRO_0000131133" description="Large ribosomal subunit protein eL32">
    <location>
        <begin position="1"/>
        <end position="134"/>
    </location>
</feature>
<feature type="sequence variant" description="In strain: TB12.O3+4+8, TB131.O3+4+8, TB132.O3+4+8, TB144.O3+4+8, TB150.O3+4+8, TB153.O3+4+8, TB173.O3+4+8, TB189.O3+4+8, TB19.O3+4+8, TB192.O3+4+8, TB198.O3+4+8, TB202.O3+4+8, TB27.O3+4+8, TB35.O3+4+8, TB358a.O3+4+8, TB64.O3+4+8, TB80.O3+4+8 and TB98pp.O3+4+8.">
    <original>I</original>
    <variation>V</variation>
    <location>
        <position position="93"/>
    </location>
</feature>
<keyword id="KW-0687">Ribonucleoprotein</keyword>
<keyword id="KW-0689">Ribosomal protein</keyword>
<reference key="1">
    <citation type="journal article" date="1988" name="Mol. Biol. Evol.">
        <title>Nucleotide sequence comparison of the rp49 gene region between Drosophila subobscura and D. melanogaster.</title>
        <authorList>
            <person name="Aguade M."/>
        </authorList>
    </citation>
    <scope>NUCLEOTIDE SEQUENCE [GENOMIC DNA]</scope>
</reference>
<reference key="2">
    <citation type="journal article" date="1993" name="Proc. Natl. Acad. Sci. U.S.A.">
        <title>Transfer of genetic information in the rp49 region of Drosophila subobscura between different chromosomal gene arrangements.</title>
        <authorList>
            <person name="Rozas J."/>
            <person name="Aguade M."/>
        </authorList>
    </citation>
    <scope>NUCLEOTIDE SEQUENCE [GENOMIC DNA]</scope>
    <source>
        <strain>B1</strain>
        <strain>B2</strain>
        <strain>B3</strain>
        <strain>B4</strain>
        <strain>B5</strain>
        <strain>B6</strain>
        <strain>B8</strain>
        <strain>B9</strain>
        <strain>T7</strain>
    </source>
</reference>
<reference key="3">
    <citation type="journal article" date="1994" name="Proc. Natl. Acad. Sci. U.S.A.">
        <title>Gene conversion is involved in the transfer of genetic information between naturally occurring inversions of Drosophila.</title>
        <authorList>
            <person name="Rozas J."/>
            <person name="Aguade M."/>
        </authorList>
    </citation>
    <scope>NUCLEOTIDE SEQUENCE [GENOMIC DNA]</scope>
    <source>
        <strain>J1.Ost</strain>
        <strain>J11.Ost</strain>
        <strain>J12.Ost</strain>
        <strain>J13.Ost</strain>
        <strain>J14.Ost</strain>
        <strain>J16.03+4</strain>
        <strain>J17.03+4</strain>
        <strain>J18.03+4</strain>
        <strain>J19.03+4</strain>
        <strain>J1F.Ost</strain>
        <strain>J2.Ost</strain>
        <strain>J20.03+4</strain>
        <strain>J21.03+4</strain>
        <strain>J22.03+4</strain>
        <strain>J23.03+4</strain>
        <strain>J24.03+4</strain>
        <strain>J25.03+4</strain>
        <strain>J26.03+4</strain>
        <strain>J27.03+4</strain>
        <strain>J28.03+4</strain>
        <strain>J29.03+4</strain>
        <strain>J3.03+4</strain>
        <strain>J3.Ost</strain>
        <strain>J31.03+4</strain>
        <strain>J32.03+4</strain>
        <strain>J33.Ost</strain>
        <strain>J34.Ost</strain>
        <strain>J4.Ost</strain>
        <strain>J5.Ost</strain>
        <strain>J6.Ost</strain>
        <strain>J8.Ost</strain>
        <strain>J9.Ost</strain>
    </source>
</reference>
<reference key="4">
    <citation type="journal article" date="1999" name="Genetics">
        <title>Molecular population genetics of the rp49 gene region in different chromosomal inversions of Drosophila subobscura.</title>
        <authorList>
            <person name="Rozas J."/>
            <person name="Segarra C."/>
            <person name="Ribo G."/>
            <person name="Aguade M."/>
        </authorList>
    </citation>
    <scope>NUCLEOTIDE SEQUENCE [GENOMIC DNA]</scope>
    <source>
        <strain>S10</strain>
        <strain>S11</strain>
        <strain>S12</strain>
        <strain>S13</strain>
        <strain>S14</strain>
        <strain>S15a</strain>
        <strain>S16</strain>
        <strain>S18</strain>
        <strain>S2</strain>
        <strain>S21</strain>
        <strain>S22</strain>
        <strain>S23</strain>
        <strain>S3</strain>
        <strain>S4</strain>
        <strain>S8</strain>
        <strain>S9</strain>
        <strain>TB12.O3+4+8</strain>
        <strain>TB131.O3+4+8</strain>
        <strain>TB132.O3+4+8</strain>
        <strain>TB144.O3+4+8</strain>
        <strain>TB150.O3+4+8</strain>
        <strain>TB153.O3+4+8</strain>
        <strain>TB154.O3+4+23</strain>
        <strain>TB167.O3+4+23</strain>
        <strain>TB173.O3+4+8</strain>
        <strain>TB174b.O3+4+23</strain>
        <strain>TB189.O3+4+8</strain>
        <strain>TB19.O3+4+8</strain>
        <strain>TB192.O3+4+8</strain>
        <strain>TB198.O3+4+8</strain>
        <strain>TB2.O3+4+23</strain>
        <strain>TB200.03+4+23</strain>
        <strain>TB202.O3+4+8</strain>
        <strain>TB204.O3+4+23</strain>
        <strain>TB21.O3+4+23</strain>
        <strain>TB27.O3+4+8</strain>
        <strain>TB303a.O3+4+23</strain>
        <strain>TB315a.O3+4+23</strain>
        <strain>TB316a.O3+4+23</strain>
        <strain>TB35.O3+4+8</strain>
        <strain>TB358a.O3+4+8</strain>
        <strain>TB358c.O3+4+23</strain>
        <strain>TB366.O3+4+23</strain>
        <strain>TB381b.O3+4+8</strain>
        <strain>TB381c.O3+4+23</strain>
        <strain>TB389.O3+4+8</strain>
        <strain>TB390a.O3+4+23</strain>
        <strain>TB398a.O3+4+23</strain>
        <strain>TB411a.O3+4+23</strain>
        <strain>TB422a.O3+4+8</strain>
        <strain>TB422b.O3+4+23</strain>
        <strain>TB43.O3+4+23</strain>
        <strain>TB64.O3+4+8</strain>
        <strain>TB7.O3+4+23</strain>
        <strain>TB70.O3+4+23</strain>
        <strain>TB80.O3+4+8</strain>
        <strain>TB98pp.O3+4+8</strain>
    </source>
</reference>
<name>RL32_DROSU</name>
<accession>P84311</accession>
<accession>P13930</accession>
<evidence type="ECO:0000305" key="1"/>
<sequence length="134" mass="16076">MTIRPAYRPKIIKKRTKHFIRHQSDRYAKLSHKWRKPKGIDNRVRRRFKGQYLMPNIGYGSNKRTRHMLPTGFKKFLVHNVRELEVLLMQNRIYCGEIAHAVSSKKRKEIVERAKQLSIRLTNPNGRLRSQENE</sequence>